<reference key="1">
    <citation type="journal article" date="2010" name="Mol. Phylogenet. Evol.">
        <title>Evolution of Conus peptide toxins: analysis of Conus californicus Reeve, 1844.</title>
        <authorList>
            <person name="Biggs J.S."/>
            <person name="Watkins M."/>
            <person name="Puillandre N."/>
            <person name="Ownby J.P."/>
            <person name="Lopez-Vera E."/>
            <person name="Christensen S."/>
            <person name="Moreno K.J."/>
            <person name="Bernaldez J."/>
            <person name="Licea-Navarro A."/>
            <person name="Corneli P.S."/>
            <person name="Olivera B.M."/>
        </authorList>
    </citation>
    <scope>NUCLEOTIDE SEQUENCE [GENOMIC DNA]</scope>
</reference>
<organism>
    <name type="scientific">Californiconus californicus</name>
    <name type="common">California cone</name>
    <name type="synonym">Conus californicus</name>
    <dbReference type="NCBI Taxonomy" id="1736779"/>
    <lineage>
        <taxon>Eukaryota</taxon>
        <taxon>Metazoa</taxon>
        <taxon>Spiralia</taxon>
        <taxon>Lophotrochozoa</taxon>
        <taxon>Mollusca</taxon>
        <taxon>Gastropoda</taxon>
        <taxon>Caenogastropoda</taxon>
        <taxon>Neogastropoda</taxon>
        <taxon>Conoidea</taxon>
        <taxon>Conidae</taxon>
        <taxon>Californiconus</taxon>
    </lineage>
</organism>
<accession>D6C4H6</accession>
<keyword id="KW-1015">Disulfide bond</keyword>
<keyword id="KW-0528">Neurotoxin</keyword>
<keyword id="KW-0964">Secreted</keyword>
<keyword id="KW-0800">Toxin</keyword>
<proteinExistence type="inferred from homology"/>
<protein>
    <recommendedName>
        <fullName>Conotoxin Cl1.2</fullName>
    </recommendedName>
</protein>
<name>CU12_CONCL</name>
<sequence>FDDLMLLLCCRQGPVCFIPLNEWPCSRM</sequence>
<comment type="subcellular location">
    <subcellularLocation>
        <location evidence="1">Secreted</location>
    </subcellularLocation>
</comment>
<comment type="tissue specificity">
    <text>Expressed by the venom duct.</text>
</comment>
<comment type="domain">
    <text>The cysteine framework is I (CC-C-C). Alpha5/8 pattern.</text>
</comment>
<comment type="PTM">
    <text evidence="1">Contains 2 disulfide bonds.</text>
</comment>
<dbReference type="EMBL" id="FJ959118">
    <property type="protein sequence ID" value="ADB93088.1"/>
    <property type="molecule type" value="Genomic_DNA"/>
</dbReference>
<dbReference type="ConoServer" id="4004">
    <property type="toxin name" value="Cal1.4"/>
</dbReference>
<dbReference type="GO" id="GO:0005576">
    <property type="term" value="C:extracellular region"/>
    <property type="evidence" value="ECO:0007669"/>
    <property type="project" value="UniProtKB-SubCell"/>
</dbReference>
<dbReference type="GO" id="GO:0090729">
    <property type="term" value="F:toxin activity"/>
    <property type="evidence" value="ECO:0007669"/>
    <property type="project" value="UniProtKB-KW"/>
</dbReference>
<evidence type="ECO:0000250" key="1"/>
<feature type="peptide" id="PRO_0000414959" description="Conotoxin Cl1.2">
    <location>
        <begin position="1"/>
        <end position="28"/>
    </location>
</feature>